<dbReference type="EC" id="5.3.2.6"/>
<dbReference type="EMBL" id="AF134348">
    <property type="protein sequence ID" value="AAL83667.1"/>
    <property type="molecule type" value="Genomic_DNA"/>
</dbReference>
<dbReference type="RefSeq" id="WP_003454301.1">
    <property type="nucleotide sequence ID" value="NZ_MING01000087.1"/>
</dbReference>
<dbReference type="RefSeq" id="YP_003617191.1">
    <property type="nucleotide sequence ID" value="NC_014124.1"/>
</dbReference>
<dbReference type="RefSeq" id="YP_709354.1">
    <property type="nucleotide sequence ID" value="NC_008275.1"/>
</dbReference>
<dbReference type="SMR" id="Q8RQD2"/>
<dbReference type="UniPathway" id="UPA00228"/>
<dbReference type="UniPathway" id="UPA00273"/>
<dbReference type="GO" id="GO:0016853">
    <property type="term" value="F:isomerase activity"/>
    <property type="evidence" value="ECO:0007669"/>
    <property type="project" value="UniProtKB-KW"/>
</dbReference>
<dbReference type="GO" id="GO:0042203">
    <property type="term" value="P:toluene catabolic process"/>
    <property type="evidence" value="ECO:0007669"/>
    <property type="project" value="UniProtKB-UniPathway"/>
</dbReference>
<dbReference type="GO" id="GO:0042184">
    <property type="term" value="P:xylene catabolic process"/>
    <property type="evidence" value="ECO:0007669"/>
    <property type="project" value="UniProtKB-UniPathway"/>
</dbReference>
<dbReference type="CDD" id="cd00491">
    <property type="entry name" value="4Oxalocrotonate_Tautomerase"/>
    <property type="match status" value="1"/>
</dbReference>
<dbReference type="Gene3D" id="3.30.429.10">
    <property type="entry name" value="Macrophage Migration Inhibitory Factor"/>
    <property type="match status" value="1"/>
</dbReference>
<dbReference type="InterPro" id="IPR018191">
    <property type="entry name" value="4-OT"/>
</dbReference>
<dbReference type="InterPro" id="IPR004370">
    <property type="entry name" value="4-OT-like_dom"/>
</dbReference>
<dbReference type="InterPro" id="IPR014347">
    <property type="entry name" value="Tautomerase/MIF_sf"/>
</dbReference>
<dbReference type="NCBIfam" id="NF002571">
    <property type="entry name" value="PRK02220.1"/>
    <property type="match status" value="1"/>
</dbReference>
<dbReference type="NCBIfam" id="TIGR00013">
    <property type="entry name" value="taut"/>
    <property type="match status" value="1"/>
</dbReference>
<dbReference type="PANTHER" id="PTHR35530:SF1">
    <property type="entry name" value="2-HYDROXYMUCONATE TAUTOMERASE"/>
    <property type="match status" value="1"/>
</dbReference>
<dbReference type="PANTHER" id="PTHR35530">
    <property type="entry name" value="TAUTOMERASE-RELATED"/>
    <property type="match status" value="1"/>
</dbReference>
<dbReference type="Pfam" id="PF01361">
    <property type="entry name" value="Tautomerase"/>
    <property type="match status" value="1"/>
</dbReference>
<dbReference type="SUPFAM" id="SSF55331">
    <property type="entry name" value="Tautomerase/MIF"/>
    <property type="match status" value="1"/>
</dbReference>
<protein>
    <recommendedName>
        <fullName>2-hydroxymuconate tautomerase</fullName>
        <ecNumber>5.3.2.6</ecNumber>
    </recommendedName>
    <alternativeName>
        <fullName>4-oxalocrotonate tautomerase</fullName>
        <shortName>4-OT</shortName>
    </alternativeName>
</protein>
<gene>
    <name type="primary">xylH</name>
</gene>
<sequence length="63" mass="6969">MPIAQIHILEGRNDEQKETLIREVSEAISRSLDAPLTSVRVIITEMAKGHFGIGGELASKVRR</sequence>
<name>4OT2_PSEPU</name>
<comment type="function">
    <text>Catalyzes the ketonization of 2-hydroxymuconate stereoselectively to yield 2-oxo-3-hexenedioate.</text>
</comment>
<comment type="catalytic activity">
    <reaction>
        <text>(2Z,4E)-2-hydroxyhexa-2,4-dienedioate = (3E)-2-oxohex-3-enedioate</text>
        <dbReference type="Rhea" id="RHEA:33431"/>
        <dbReference type="ChEBI" id="CHEBI:28080"/>
        <dbReference type="ChEBI" id="CHEBI:64908"/>
        <dbReference type="EC" id="5.3.2.6"/>
    </reaction>
</comment>
<comment type="pathway">
    <text>Xenobiotic degradation; toluene degradation.</text>
</comment>
<comment type="pathway">
    <text>Xenobiotic degradation; xylene degradation.</text>
</comment>
<comment type="subunit">
    <text evidence="1">Homohexamer.</text>
</comment>
<comment type="similarity">
    <text evidence="2">Belongs to the 4-oxalocrotonate tautomerase family.</text>
</comment>
<keyword id="KW-0058">Aromatic hydrocarbons catabolism</keyword>
<keyword id="KW-0413">Isomerase</keyword>
<keyword id="KW-0614">Plasmid</keyword>
<organism>
    <name type="scientific">Pseudomonas putida</name>
    <name type="common">Arthrobacter siderocapsulatus</name>
    <dbReference type="NCBI Taxonomy" id="303"/>
    <lineage>
        <taxon>Bacteria</taxon>
        <taxon>Pseudomonadati</taxon>
        <taxon>Pseudomonadota</taxon>
        <taxon>Gammaproteobacteria</taxon>
        <taxon>Pseudomonadales</taxon>
        <taxon>Pseudomonadaceae</taxon>
        <taxon>Pseudomonas</taxon>
    </lineage>
</organism>
<proteinExistence type="inferred from homology"/>
<accession>Q8RQD2</accession>
<feature type="initiator methionine" description="Removed" evidence="1">
    <location>
        <position position="1"/>
    </location>
</feature>
<feature type="chain" id="PRO_0000209515" description="2-hydroxymuconate tautomerase">
    <location>
        <begin position="2"/>
        <end position="63"/>
    </location>
</feature>
<feature type="active site" description="Proton acceptor; via imino nitrogen" evidence="1">
    <location>
        <position position="2"/>
    </location>
</feature>
<geneLocation type="plasmid">
    <name>TOL pDK1</name>
</geneLocation>
<reference key="1">
    <citation type="submission" date="2002-03" db="EMBL/GenBank/DDBJ databases">
        <title>Sequence of the lower (meta-cleavage) xyl operon of the Pseudomonas putida TOL plasmid pDK1.</title>
        <authorList>
            <person name="Wessler H.G."/>
            <person name="Hares D.R."/>
            <person name="Poulter M.D."/>
            <person name="Voss J.A."/>
            <person name="Khedairy H.S."/>
            <person name="Baker R.F."/>
            <person name="Azadpour E.E."/>
            <person name="Luo X."/>
            <person name="Benjamin R.C."/>
        </authorList>
    </citation>
    <scope>NUCLEOTIDE SEQUENCE [GENOMIC DNA]</scope>
    <source>
        <strain>PaW630</strain>
    </source>
</reference>
<evidence type="ECO:0000250" key="1"/>
<evidence type="ECO:0000305" key="2"/>